<feature type="chain" id="PRO_0000205976" description="Frizzled-3">
    <location>
        <begin position="1" status="less than"/>
        <end position="76" status="greater than"/>
    </location>
</feature>
<feature type="topological domain" description="Cytoplasmic" evidence="3">
    <location>
        <begin position="1" status="less than"/>
        <end position="5"/>
    </location>
</feature>
<feature type="transmembrane region" description="Helical; Name=2" evidence="3">
    <location>
        <begin position="6"/>
        <end position="26"/>
    </location>
</feature>
<feature type="topological domain" description="Extracellular" evidence="3">
    <location>
        <begin position="27"/>
        <end position="54"/>
    </location>
</feature>
<feature type="transmembrane region" description="Helical; Name=3" evidence="3">
    <location>
        <begin position="55"/>
        <end position="75"/>
    </location>
</feature>
<feature type="topological domain" description="Cytoplasmic" evidence="3">
    <location>
        <begin position="76"/>
        <end position="76" status="greater than"/>
    </location>
</feature>
<feature type="glycosylation site" description="N-linked (GlcNAc...) asparagine" evidence="3">
    <location>
        <position position="33"/>
    </location>
</feature>
<feature type="non-terminal residue">
    <location>
        <position position="1"/>
    </location>
</feature>
<feature type="non-terminal residue">
    <location>
        <position position="76"/>
    </location>
</feature>
<gene>
    <name type="primary">FZD3</name>
    <name type="synonym">FZ3</name>
</gene>
<name>FZD3_CHICK</name>
<proteinExistence type="evidence at transcript level"/>
<organism>
    <name type="scientific">Gallus gallus</name>
    <name type="common">Chicken</name>
    <dbReference type="NCBI Taxonomy" id="9031"/>
    <lineage>
        <taxon>Eukaryota</taxon>
        <taxon>Metazoa</taxon>
        <taxon>Chordata</taxon>
        <taxon>Craniata</taxon>
        <taxon>Vertebrata</taxon>
        <taxon>Euteleostomi</taxon>
        <taxon>Archelosauria</taxon>
        <taxon>Archosauria</taxon>
        <taxon>Dinosauria</taxon>
        <taxon>Saurischia</taxon>
        <taxon>Theropoda</taxon>
        <taxon>Coelurosauria</taxon>
        <taxon>Aves</taxon>
        <taxon>Neognathae</taxon>
        <taxon>Galloanserae</taxon>
        <taxon>Galliformes</taxon>
        <taxon>Phasianidae</taxon>
        <taxon>Phasianinae</taxon>
        <taxon>Gallus</taxon>
    </lineage>
</organism>
<comment type="function">
    <text evidence="2">Receptor for Wnt proteins. Most of frizzled receptors are coupled to the beta-catenin canonical signaling pathway, which leads to the activation of disheveled proteins, inhibition of GSK-3 kinase, nuclear accumulation of beta-catenin and activation of Wnt target genes. A second signaling pathway involving PKC and calcium fluxes has been seen for some family members, but it is not yet clear if it represents a distinct pathway or if it can be integrated in the canonical pathway, as PKC seems to be required for Wnt-mediated inactivation of GSK-3 kinase. Both pathways seem to involve interactions with G-proteins. May be involved in transduction and intercellular transmission of polarity information during tissue morphogenesis and/or in differentiated tissues. Plays a role in controlling early axon growth and guidance processes necessary for the formation of a subset of central and peripheral major fiber tracts. Involved in the migration of cranial neural crest cells. May also be implicated in the transmission of sensory information from the trunk and limbs to the brain. Controls commissural sensory axons guidance after midline crossing along the anterior-posterior axis in the developing spinal cord in a Wnt-dependent signaling pathway. Together with FZD6, is involved in the neural tube closure and plays a role in the regulation of the establishment of planar cell polarity (PCP). Promotes neurogenesis by maintaining sympathetic neuroblasts within the cell cycle in a beta-catenin-dependent manner (By similarity).</text>
</comment>
<comment type="subcellular location">
    <subcellularLocation>
        <location>Membrane</location>
        <topology>Multi-pass membrane protein</topology>
    </subcellularLocation>
    <subcellularLocation>
        <location evidence="1">Cell membrane</location>
        <topology evidence="1">Multi-pass membrane protein</topology>
    </subcellularLocation>
    <subcellularLocation>
        <location evidence="2">Cell surface</location>
    </subcellularLocation>
    <subcellularLocation>
        <location evidence="2">Apical cell membrane</location>
        <topology evidence="1">Multi-pass membrane protein</topology>
    </subcellularLocation>
</comment>
<comment type="domain">
    <text evidence="1">The FZ domain is involved in binding with Wnt ligands.</text>
</comment>
<comment type="similarity">
    <text evidence="4">Belongs to the G-protein coupled receptor Fz/Smo family.</text>
</comment>
<protein>
    <recommendedName>
        <fullName>Frizzled-3</fullName>
        <shortName>Fz-3</shortName>
        <shortName>cFz-3</shortName>
    </recommendedName>
</protein>
<sequence>YPERPIIFYAVCYMMVSLIFFIGFLLEDRVACNASSPAQYKASTVTQGSHNKACTMLFMVLYFFTMAGSVWWVILR</sequence>
<dbReference type="EMBL" id="AB029450">
    <property type="protein sequence ID" value="BAA89400.1"/>
    <property type="molecule type" value="mRNA"/>
</dbReference>
<dbReference type="SMR" id="Q9PTW3"/>
<dbReference type="STRING" id="9031.ENSGALP00000043647"/>
<dbReference type="GlyCosmos" id="Q9PTW3">
    <property type="glycosylation" value="1 site, No reported glycans"/>
</dbReference>
<dbReference type="GlyGen" id="Q9PTW3">
    <property type="glycosylation" value="1 site"/>
</dbReference>
<dbReference type="PaxDb" id="9031-ENSGALP00000026786"/>
<dbReference type="VEuPathDB" id="HostDB:geneid_395572"/>
<dbReference type="eggNOG" id="KOG3577">
    <property type="taxonomic scope" value="Eukaryota"/>
</dbReference>
<dbReference type="InParanoid" id="Q9PTW3"/>
<dbReference type="OrthoDB" id="10053709at2759"/>
<dbReference type="PhylomeDB" id="Q9PTW3"/>
<dbReference type="Proteomes" id="UP000000539">
    <property type="component" value="Unassembled WGS sequence"/>
</dbReference>
<dbReference type="GO" id="GO:0016324">
    <property type="term" value="C:apical plasma membrane"/>
    <property type="evidence" value="ECO:0007669"/>
    <property type="project" value="UniProtKB-SubCell"/>
</dbReference>
<dbReference type="GO" id="GO:0009986">
    <property type="term" value="C:cell surface"/>
    <property type="evidence" value="ECO:0007669"/>
    <property type="project" value="UniProtKB-SubCell"/>
</dbReference>
<dbReference type="GO" id="GO:0004930">
    <property type="term" value="F:G protein-coupled receptor activity"/>
    <property type="evidence" value="ECO:0007669"/>
    <property type="project" value="UniProtKB-KW"/>
</dbReference>
<dbReference type="GO" id="GO:0007399">
    <property type="term" value="P:nervous system development"/>
    <property type="evidence" value="ECO:0007669"/>
    <property type="project" value="UniProtKB-KW"/>
</dbReference>
<dbReference type="GO" id="GO:0016055">
    <property type="term" value="P:Wnt signaling pathway"/>
    <property type="evidence" value="ECO:0007669"/>
    <property type="project" value="UniProtKB-KW"/>
</dbReference>
<dbReference type="Gene3D" id="1.20.1070.10">
    <property type="entry name" value="Rhodopsin 7-helix transmembrane proteins"/>
    <property type="match status" value="1"/>
</dbReference>
<dbReference type="InterPro" id="IPR015526">
    <property type="entry name" value="Frizzled/SFRP"/>
</dbReference>
<dbReference type="InterPro" id="IPR000539">
    <property type="entry name" value="Frizzled/Smoothened_7TM"/>
</dbReference>
<dbReference type="InterPro" id="IPR017981">
    <property type="entry name" value="GPCR_2-like_7TM"/>
</dbReference>
<dbReference type="PANTHER" id="PTHR11309">
    <property type="entry name" value="FRIZZLED"/>
    <property type="match status" value="1"/>
</dbReference>
<dbReference type="PANTHER" id="PTHR11309:SF22">
    <property type="entry name" value="FRIZZLED-3"/>
    <property type="match status" value="1"/>
</dbReference>
<dbReference type="Pfam" id="PF01534">
    <property type="entry name" value="Frizzled"/>
    <property type="match status" value="1"/>
</dbReference>
<dbReference type="PRINTS" id="PR00489">
    <property type="entry name" value="FRIZZLED"/>
</dbReference>
<dbReference type="PROSITE" id="PS50261">
    <property type="entry name" value="G_PROTEIN_RECEP_F2_4"/>
    <property type="match status" value="1"/>
</dbReference>
<evidence type="ECO:0000250" key="1"/>
<evidence type="ECO:0000250" key="2">
    <source>
        <dbReference type="UniProtKB" id="Q61086"/>
    </source>
</evidence>
<evidence type="ECO:0000255" key="3"/>
<evidence type="ECO:0000305" key="4"/>
<keyword id="KW-1003">Cell membrane</keyword>
<keyword id="KW-0217">Developmental protein</keyword>
<keyword id="KW-0297">G-protein coupled receptor</keyword>
<keyword id="KW-0325">Glycoprotein</keyword>
<keyword id="KW-0472">Membrane</keyword>
<keyword id="KW-0524">Neurogenesis</keyword>
<keyword id="KW-0675">Receptor</keyword>
<keyword id="KW-1185">Reference proteome</keyword>
<keyword id="KW-0807">Transducer</keyword>
<keyword id="KW-0812">Transmembrane</keyword>
<keyword id="KW-1133">Transmembrane helix</keyword>
<keyword id="KW-0879">Wnt signaling pathway</keyword>
<reference key="1">
    <citation type="journal article" date="1999" name="Cell. Mol. Biol.">
        <title>Differential expression of the frizzled family involved in Wnt signaling during chick limb development.</title>
        <authorList>
            <person name="Nohno T."/>
            <person name="Kawakami Y."/>
            <person name="Wada N."/>
            <person name="Komaguchi C."/>
            <person name="Nishimatsu S."/>
        </authorList>
    </citation>
    <scope>NUCLEOTIDE SEQUENCE [MRNA]</scope>
    <source>
        <tissue>Limb bud</tissue>
    </source>
</reference>
<accession>Q9PTW3</accession>